<sequence length="583" mass="65938">MERSMYAGRVRSEHIGTTITLKGWVSRRRNLGGLIFIDLRDREGLMQLVVNPENTDAAVVETAESLRSEFVIEVTGTVEAREQANDNLPTGAVELKVEDLKVLNTAKTTPFEIKDGVEASDDTRMRYRYLDLRRPEMLENFKLRAKVTHTIRNYLDDLEFIDVETPMLTKSTPEGARDYLVPSRVSQGHFYALPQSPQITKQLLMNAGFDRYYQIVKCFRDEDLRGDRQPEFTQVDLETSFLNEQEIQDITEGLIAKVMKETKGVEVTLPFPRMSYDDAMNNYGSDKPDTRFDMLLQDLTELVKDVDFKVFAEAPAVKAIVVKGNADKYSRKSIDKLTDFAKQFGAKGLAWVKMTDGVLAGPVAKFLTSIEEKLTDALQIEENDLVLFVADTLEIANNTLGALRNQIAKELDMIDNTKFNFLWVVDWPMFEWSEEEGRYMSAHHPFTLPTEDSAAELEGDLSKVRAVAYDIVLNGYELGGGSLRINQKDLQERMLKALGFSEESAYEQFGFLLEAMDYGFPPHGGLALGLDRFVMLLAGKDNIREVIAFPKNNKASDPMTQAPSLVADKQLEELALHVELENE</sequence>
<dbReference type="EC" id="6.1.1.12" evidence="1"/>
<dbReference type="EMBL" id="CP000419">
    <property type="protein sequence ID" value="ABJ67058.1"/>
    <property type="molecule type" value="Genomic_DNA"/>
</dbReference>
<dbReference type="RefSeq" id="WP_011681740.1">
    <property type="nucleotide sequence ID" value="NZ_CP086001.1"/>
</dbReference>
<dbReference type="SMR" id="Q03IB4"/>
<dbReference type="KEGG" id="ste:STER_1948"/>
<dbReference type="HOGENOM" id="CLU_014330_3_2_9"/>
<dbReference type="GO" id="GO:0005737">
    <property type="term" value="C:cytoplasm"/>
    <property type="evidence" value="ECO:0007669"/>
    <property type="project" value="UniProtKB-SubCell"/>
</dbReference>
<dbReference type="GO" id="GO:0004815">
    <property type="term" value="F:aspartate-tRNA ligase activity"/>
    <property type="evidence" value="ECO:0007669"/>
    <property type="project" value="UniProtKB-UniRule"/>
</dbReference>
<dbReference type="GO" id="GO:0005524">
    <property type="term" value="F:ATP binding"/>
    <property type="evidence" value="ECO:0007669"/>
    <property type="project" value="UniProtKB-UniRule"/>
</dbReference>
<dbReference type="GO" id="GO:0140096">
    <property type="term" value="F:catalytic activity, acting on a protein"/>
    <property type="evidence" value="ECO:0007669"/>
    <property type="project" value="UniProtKB-ARBA"/>
</dbReference>
<dbReference type="GO" id="GO:0003676">
    <property type="term" value="F:nucleic acid binding"/>
    <property type="evidence" value="ECO:0007669"/>
    <property type="project" value="InterPro"/>
</dbReference>
<dbReference type="GO" id="GO:0016740">
    <property type="term" value="F:transferase activity"/>
    <property type="evidence" value="ECO:0007669"/>
    <property type="project" value="UniProtKB-ARBA"/>
</dbReference>
<dbReference type="GO" id="GO:0006422">
    <property type="term" value="P:aspartyl-tRNA aminoacylation"/>
    <property type="evidence" value="ECO:0007669"/>
    <property type="project" value="UniProtKB-UniRule"/>
</dbReference>
<dbReference type="CDD" id="cd00777">
    <property type="entry name" value="AspRS_core"/>
    <property type="match status" value="1"/>
</dbReference>
<dbReference type="CDD" id="cd04317">
    <property type="entry name" value="EcAspRS_like_N"/>
    <property type="match status" value="1"/>
</dbReference>
<dbReference type="Gene3D" id="3.30.930.10">
    <property type="entry name" value="Bira Bifunctional Protein, Domain 2"/>
    <property type="match status" value="1"/>
</dbReference>
<dbReference type="Gene3D" id="3.30.1360.30">
    <property type="entry name" value="GAD-like domain"/>
    <property type="match status" value="1"/>
</dbReference>
<dbReference type="Gene3D" id="2.40.50.140">
    <property type="entry name" value="Nucleic acid-binding proteins"/>
    <property type="match status" value="1"/>
</dbReference>
<dbReference type="HAMAP" id="MF_00044">
    <property type="entry name" value="Asp_tRNA_synth_type1"/>
    <property type="match status" value="1"/>
</dbReference>
<dbReference type="InterPro" id="IPR004364">
    <property type="entry name" value="Aa-tRNA-synt_II"/>
</dbReference>
<dbReference type="InterPro" id="IPR006195">
    <property type="entry name" value="aa-tRNA-synth_II"/>
</dbReference>
<dbReference type="InterPro" id="IPR045864">
    <property type="entry name" value="aa-tRNA-synth_II/BPL/LPL"/>
</dbReference>
<dbReference type="InterPro" id="IPR004524">
    <property type="entry name" value="Asp-tRNA-ligase_1"/>
</dbReference>
<dbReference type="InterPro" id="IPR047089">
    <property type="entry name" value="Asp-tRNA-ligase_1_N"/>
</dbReference>
<dbReference type="InterPro" id="IPR002312">
    <property type="entry name" value="Asp/Asn-tRNA-synth_IIb"/>
</dbReference>
<dbReference type="InterPro" id="IPR047090">
    <property type="entry name" value="AspRS_core"/>
</dbReference>
<dbReference type="InterPro" id="IPR004115">
    <property type="entry name" value="GAD-like_sf"/>
</dbReference>
<dbReference type="InterPro" id="IPR029351">
    <property type="entry name" value="GAD_dom"/>
</dbReference>
<dbReference type="InterPro" id="IPR012340">
    <property type="entry name" value="NA-bd_OB-fold"/>
</dbReference>
<dbReference type="InterPro" id="IPR004365">
    <property type="entry name" value="NA-bd_OB_tRNA"/>
</dbReference>
<dbReference type="NCBIfam" id="TIGR00459">
    <property type="entry name" value="aspS_bact"/>
    <property type="match status" value="1"/>
</dbReference>
<dbReference type="NCBIfam" id="NF001750">
    <property type="entry name" value="PRK00476.1"/>
    <property type="match status" value="1"/>
</dbReference>
<dbReference type="PANTHER" id="PTHR22594:SF5">
    <property type="entry name" value="ASPARTATE--TRNA LIGASE, MITOCHONDRIAL"/>
    <property type="match status" value="1"/>
</dbReference>
<dbReference type="PANTHER" id="PTHR22594">
    <property type="entry name" value="ASPARTYL/LYSYL-TRNA SYNTHETASE"/>
    <property type="match status" value="1"/>
</dbReference>
<dbReference type="Pfam" id="PF02938">
    <property type="entry name" value="GAD"/>
    <property type="match status" value="1"/>
</dbReference>
<dbReference type="Pfam" id="PF00152">
    <property type="entry name" value="tRNA-synt_2"/>
    <property type="match status" value="1"/>
</dbReference>
<dbReference type="Pfam" id="PF01336">
    <property type="entry name" value="tRNA_anti-codon"/>
    <property type="match status" value="1"/>
</dbReference>
<dbReference type="PRINTS" id="PR01042">
    <property type="entry name" value="TRNASYNTHASP"/>
</dbReference>
<dbReference type="SUPFAM" id="SSF55681">
    <property type="entry name" value="Class II aaRS and biotin synthetases"/>
    <property type="match status" value="1"/>
</dbReference>
<dbReference type="SUPFAM" id="SSF55261">
    <property type="entry name" value="GAD domain-like"/>
    <property type="match status" value="1"/>
</dbReference>
<dbReference type="SUPFAM" id="SSF50249">
    <property type="entry name" value="Nucleic acid-binding proteins"/>
    <property type="match status" value="1"/>
</dbReference>
<dbReference type="PROSITE" id="PS50862">
    <property type="entry name" value="AA_TRNA_LIGASE_II"/>
    <property type="match status" value="1"/>
</dbReference>
<feature type="chain" id="PRO_1000006772" description="Aspartate--tRNA ligase">
    <location>
        <begin position="1"/>
        <end position="583"/>
    </location>
</feature>
<feature type="region of interest" description="Aspartate" evidence="1">
    <location>
        <begin position="198"/>
        <end position="201"/>
    </location>
</feature>
<feature type="binding site" evidence="1">
    <location>
        <position position="174"/>
    </location>
    <ligand>
        <name>L-aspartate</name>
        <dbReference type="ChEBI" id="CHEBI:29991"/>
    </ligand>
</feature>
<feature type="binding site" evidence="1">
    <location>
        <begin position="220"/>
        <end position="222"/>
    </location>
    <ligand>
        <name>ATP</name>
        <dbReference type="ChEBI" id="CHEBI:30616"/>
    </ligand>
</feature>
<feature type="binding site" evidence="1">
    <location>
        <position position="220"/>
    </location>
    <ligand>
        <name>L-aspartate</name>
        <dbReference type="ChEBI" id="CHEBI:29991"/>
    </ligand>
</feature>
<feature type="binding site" evidence="1">
    <location>
        <position position="229"/>
    </location>
    <ligand>
        <name>ATP</name>
        <dbReference type="ChEBI" id="CHEBI:30616"/>
    </ligand>
</feature>
<feature type="binding site" evidence="1">
    <location>
        <position position="443"/>
    </location>
    <ligand>
        <name>L-aspartate</name>
        <dbReference type="ChEBI" id="CHEBI:29991"/>
    </ligand>
</feature>
<feature type="binding site" evidence="1">
    <location>
        <position position="477"/>
    </location>
    <ligand>
        <name>ATP</name>
        <dbReference type="ChEBI" id="CHEBI:30616"/>
    </ligand>
</feature>
<feature type="binding site" evidence="1">
    <location>
        <position position="484"/>
    </location>
    <ligand>
        <name>L-aspartate</name>
        <dbReference type="ChEBI" id="CHEBI:29991"/>
    </ligand>
</feature>
<feature type="binding site" evidence="1">
    <location>
        <begin position="529"/>
        <end position="532"/>
    </location>
    <ligand>
        <name>ATP</name>
        <dbReference type="ChEBI" id="CHEBI:30616"/>
    </ligand>
</feature>
<organism>
    <name type="scientific">Streptococcus thermophilus (strain ATCC BAA-491 / LMD-9)</name>
    <dbReference type="NCBI Taxonomy" id="322159"/>
    <lineage>
        <taxon>Bacteria</taxon>
        <taxon>Bacillati</taxon>
        <taxon>Bacillota</taxon>
        <taxon>Bacilli</taxon>
        <taxon>Lactobacillales</taxon>
        <taxon>Streptococcaceae</taxon>
        <taxon>Streptococcus</taxon>
    </lineage>
</organism>
<evidence type="ECO:0000255" key="1">
    <source>
        <dbReference type="HAMAP-Rule" id="MF_00044"/>
    </source>
</evidence>
<protein>
    <recommendedName>
        <fullName evidence="1">Aspartate--tRNA ligase</fullName>
        <ecNumber evidence="1">6.1.1.12</ecNumber>
    </recommendedName>
    <alternativeName>
        <fullName evidence="1">Aspartyl-tRNA synthetase</fullName>
        <shortName evidence="1">AspRS</shortName>
    </alternativeName>
</protein>
<proteinExistence type="inferred from homology"/>
<reference key="1">
    <citation type="journal article" date="2006" name="Proc. Natl. Acad. Sci. U.S.A.">
        <title>Comparative genomics of the lactic acid bacteria.</title>
        <authorList>
            <person name="Makarova K.S."/>
            <person name="Slesarev A."/>
            <person name="Wolf Y.I."/>
            <person name="Sorokin A."/>
            <person name="Mirkin B."/>
            <person name="Koonin E.V."/>
            <person name="Pavlov A."/>
            <person name="Pavlova N."/>
            <person name="Karamychev V."/>
            <person name="Polouchine N."/>
            <person name="Shakhova V."/>
            <person name="Grigoriev I."/>
            <person name="Lou Y."/>
            <person name="Rohksar D."/>
            <person name="Lucas S."/>
            <person name="Huang K."/>
            <person name="Goodstein D.M."/>
            <person name="Hawkins T."/>
            <person name="Plengvidhya V."/>
            <person name="Welker D."/>
            <person name="Hughes J."/>
            <person name="Goh Y."/>
            <person name="Benson A."/>
            <person name="Baldwin K."/>
            <person name="Lee J.-H."/>
            <person name="Diaz-Muniz I."/>
            <person name="Dosti B."/>
            <person name="Smeianov V."/>
            <person name="Wechter W."/>
            <person name="Barabote R."/>
            <person name="Lorca G."/>
            <person name="Altermann E."/>
            <person name="Barrangou R."/>
            <person name="Ganesan B."/>
            <person name="Xie Y."/>
            <person name="Rawsthorne H."/>
            <person name="Tamir D."/>
            <person name="Parker C."/>
            <person name="Breidt F."/>
            <person name="Broadbent J.R."/>
            <person name="Hutkins R."/>
            <person name="O'Sullivan D."/>
            <person name="Steele J."/>
            <person name="Unlu G."/>
            <person name="Saier M.H. Jr."/>
            <person name="Klaenhammer T."/>
            <person name="Richardson P."/>
            <person name="Kozyavkin S."/>
            <person name="Weimer B.C."/>
            <person name="Mills D.A."/>
        </authorList>
    </citation>
    <scope>NUCLEOTIDE SEQUENCE [LARGE SCALE GENOMIC DNA]</scope>
    <source>
        <strain>ATCC BAA-491 / LMD-9</strain>
    </source>
</reference>
<keyword id="KW-0030">Aminoacyl-tRNA synthetase</keyword>
<keyword id="KW-0067">ATP-binding</keyword>
<keyword id="KW-0963">Cytoplasm</keyword>
<keyword id="KW-0436">Ligase</keyword>
<keyword id="KW-0547">Nucleotide-binding</keyword>
<keyword id="KW-0648">Protein biosynthesis</keyword>
<comment type="function">
    <text evidence="1">Catalyzes the attachment of L-aspartate to tRNA(Asp) in a two-step reaction: L-aspartate is first activated by ATP to form Asp-AMP and then transferred to the acceptor end of tRNA(Asp).</text>
</comment>
<comment type="catalytic activity">
    <reaction evidence="1">
        <text>tRNA(Asp) + L-aspartate + ATP = L-aspartyl-tRNA(Asp) + AMP + diphosphate</text>
        <dbReference type="Rhea" id="RHEA:19649"/>
        <dbReference type="Rhea" id="RHEA-COMP:9660"/>
        <dbReference type="Rhea" id="RHEA-COMP:9678"/>
        <dbReference type="ChEBI" id="CHEBI:29991"/>
        <dbReference type="ChEBI" id="CHEBI:30616"/>
        <dbReference type="ChEBI" id="CHEBI:33019"/>
        <dbReference type="ChEBI" id="CHEBI:78442"/>
        <dbReference type="ChEBI" id="CHEBI:78516"/>
        <dbReference type="ChEBI" id="CHEBI:456215"/>
        <dbReference type="EC" id="6.1.1.12"/>
    </reaction>
</comment>
<comment type="subunit">
    <text evidence="1">Homodimer.</text>
</comment>
<comment type="subcellular location">
    <subcellularLocation>
        <location evidence="1">Cytoplasm</location>
    </subcellularLocation>
</comment>
<comment type="similarity">
    <text evidence="1">Belongs to the class-II aminoacyl-tRNA synthetase family. Type 1 subfamily.</text>
</comment>
<gene>
    <name evidence="1" type="primary">aspS</name>
    <name type="ordered locus">STER_1948</name>
</gene>
<accession>Q03IB4</accession>
<name>SYD_STRTD</name>